<dbReference type="EMBL" id="BX950229">
    <property type="protein sequence ID" value="CAF29715.1"/>
    <property type="molecule type" value="Genomic_DNA"/>
</dbReference>
<dbReference type="RefSeq" id="WP_011170103.1">
    <property type="nucleotide sequence ID" value="NC_005791.1"/>
</dbReference>
<dbReference type="SMR" id="Q6M0V9"/>
<dbReference type="STRING" id="267377.MMP0159"/>
<dbReference type="EnsemblBacteria" id="CAF29715">
    <property type="protein sequence ID" value="CAF29715"/>
    <property type="gene ID" value="MMP0159"/>
</dbReference>
<dbReference type="KEGG" id="mmp:MMP0159"/>
<dbReference type="PATRIC" id="fig|267377.15.peg.163"/>
<dbReference type="eggNOG" id="arCOG04177">
    <property type="taxonomic scope" value="Archaea"/>
</dbReference>
<dbReference type="HOGENOM" id="CLU_181948_4_0_2"/>
<dbReference type="OrthoDB" id="65887at2157"/>
<dbReference type="Proteomes" id="UP000000590">
    <property type="component" value="Chromosome"/>
</dbReference>
<dbReference type="GO" id="GO:1990904">
    <property type="term" value="C:ribonucleoprotein complex"/>
    <property type="evidence" value="ECO:0007669"/>
    <property type="project" value="UniProtKB-KW"/>
</dbReference>
<dbReference type="GO" id="GO:0005840">
    <property type="term" value="C:ribosome"/>
    <property type="evidence" value="ECO:0007669"/>
    <property type="project" value="UniProtKB-KW"/>
</dbReference>
<dbReference type="GO" id="GO:0003735">
    <property type="term" value="F:structural constituent of ribosome"/>
    <property type="evidence" value="ECO:0007669"/>
    <property type="project" value="InterPro"/>
</dbReference>
<dbReference type="GO" id="GO:0006412">
    <property type="term" value="P:translation"/>
    <property type="evidence" value="ECO:0007669"/>
    <property type="project" value="UniProtKB-UniRule"/>
</dbReference>
<dbReference type="Gene3D" id="1.10.1620.10">
    <property type="entry name" value="Ribosomal protein L39e"/>
    <property type="match status" value="1"/>
</dbReference>
<dbReference type="HAMAP" id="MF_00629">
    <property type="entry name" value="Ribosomal_eL39"/>
    <property type="match status" value="1"/>
</dbReference>
<dbReference type="InterPro" id="IPR000077">
    <property type="entry name" value="Ribosomal_eL39"/>
</dbReference>
<dbReference type="InterPro" id="IPR020083">
    <property type="entry name" value="Ribosomal_eL39_CS"/>
</dbReference>
<dbReference type="InterPro" id="IPR023626">
    <property type="entry name" value="Ribosomal_eL39_dom_sf"/>
</dbReference>
<dbReference type="NCBIfam" id="NF002316">
    <property type="entry name" value="PRK01242.1"/>
    <property type="match status" value="1"/>
</dbReference>
<dbReference type="Pfam" id="PF00832">
    <property type="entry name" value="Ribosomal_L39"/>
    <property type="match status" value="1"/>
</dbReference>
<dbReference type="SUPFAM" id="SSF48662">
    <property type="entry name" value="Ribosomal protein L39e"/>
    <property type="match status" value="1"/>
</dbReference>
<dbReference type="PROSITE" id="PS00051">
    <property type="entry name" value="RIBOSOMAL_L39E"/>
    <property type="match status" value="1"/>
</dbReference>
<protein>
    <recommendedName>
        <fullName evidence="1">Large ribosomal subunit protein eL39</fullName>
    </recommendedName>
    <alternativeName>
        <fullName evidence="3">50S ribosomal protein L39e</fullName>
    </alternativeName>
</protein>
<feature type="chain" id="PRO_0000127054" description="Large ribosomal subunit protein eL39">
    <location>
        <begin position="1"/>
        <end position="51"/>
    </location>
</feature>
<feature type="region of interest" description="Disordered" evidence="2">
    <location>
        <begin position="32"/>
        <end position="51"/>
    </location>
</feature>
<feature type="compositionally biased region" description="Basic residues" evidence="2">
    <location>
        <begin position="33"/>
        <end position="51"/>
    </location>
</feature>
<keyword id="KW-1185">Reference proteome</keyword>
<keyword id="KW-0687">Ribonucleoprotein</keyword>
<keyword id="KW-0689">Ribosomal protein</keyword>
<name>RL39_METMP</name>
<accession>Q6M0V9</accession>
<sequence>MAGNKPLGKKIRLAKALKQNRRVPMFAIARTKGSVKQHPKMRHWRRKNLKK</sequence>
<comment type="similarity">
    <text evidence="1">Belongs to the eukaryotic ribosomal protein eL39 family.</text>
</comment>
<organism>
    <name type="scientific">Methanococcus maripaludis (strain DSM 14266 / JCM 13030 / NBRC 101832 / S2 / LL)</name>
    <dbReference type="NCBI Taxonomy" id="267377"/>
    <lineage>
        <taxon>Archaea</taxon>
        <taxon>Methanobacteriati</taxon>
        <taxon>Methanobacteriota</taxon>
        <taxon>Methanomada group</taxon>
        <taxon>Methanococci</taxon>
        <taxon>Methanococcales</taxon>
        <taxon>Methanococcaceae</taxon>
        <taxon>Methanococcus</taxon>
    </lineage>
</organism>
<proteinExistence type="inferred from homology"/>
<evidence type="ECO:0000255" key="1">
    <source>
        <dbReference type="HAMAP-Rule" id="MF_00629"/>
    </source>
</evidence>
<evidence type="ECO:0000256" key="2">
    <source>
        <dbReference type="SAM" id="MobiDB-lite"/>
    </source>
</evidence>
<evidence type="ECO:0000305" key="3"/>
<reference key="1">
    <citation type="journal article" date="2004" name="J. Bacteriol.">
        <title>Complete genome sequence of the genetically tractable hydrogenotrophic methanogen Methanococcus maripaludis.</title>
        <authorList>
            <person name="Hendrickson E.L."/>
            <person name="Kaul R."/>
            <person name="Zhou Y."/>
            <person name="Bovee D."/>
            <person name="Chapman P."/>
            <person name="Chung J."/>
            <person name="Conway de Macario E."/>
            <person name="Dodsworth J.A."/>
            <person name="Gillett W."/>
            <person name="Graham D.E."/>
            <person name="Hackett M."/>
            <person name="Haydock A.K."/>
            <person name="Kang A."/>
            <person name="Land M.L."/>
            <person name="Levy R."/>
            <person name="Lie T.J."/>
            <person name="Major T.A."/>
            <person name="Moore B.C."/>
            <person name="Porat I."/>
            <person name="Palmeiri A."/>
            <person name="Rouse G."/>
            <person name="Saenphimmachak C."/>
            <person name="Soell D."/>
            <person name="Van Dien S."/>
            <person name="Wang T."/>
            <person name="Whitman W.B."/>
            <person name="Xia Q."/>
            <person name="Zhang Y."/>
            <person name="Larimer F.W."/>
            <person name="Olson M.V."/>
            <person name="Leigh J.A."/>
        </authorList>
    </citation>
    <scope>NUCLEOTIDE SEQUENCE [LARGE SCALE GENOMIC DNA]</scope>
    <source>
        <strain>DSM 14266 / JCM 13030 / NBRC 101832 / S2 / LL</strain>
    </source>
</reference>
<gene>
    <name evidence="1" type="primary">rpl39e</name>
    <name type="ordered locus">MMP0159</name>
</gene>